<name>AP3M1_BOVIN</name>
<evidence type="ECO:0000250" key="1"/>
<evidence type="ECO:0000255" key="2">
    <source>
        <dbReference type="PROSITE-ProRule" id="PRU00404"/>
    </source>
</evidence>
<evidence type="ECO:0000305" key="3"/>
<keyword id="KW-0968">Cytoplasmic vesicle</keyword>
<keyword id="KW-0333">Golgi apparatus</keyword>
<keyword id="KW-0472">Membrane</keyword>
<keyword id="KW-0653">Protein transport</keyword>
<keyword id="KW-1185">Reference proteome</keyword>
<keyword id="KW-0813">Transport</keyword>
<gene>
    <name type="primary">AP3M1</name>
</gene>
<sequence>MIHSLFLINCSGDIFLEKHWKSVVSQSVCDYFFEAQEKAADVENVPPVISTPHHYLISIYRDKLFFVSVIQTEVPPLFVIEFLHRVADTFQDYFGECSEAAIKDNVVIVYELLEEMLDNGFPLATESNILKELIKPPTILRSGVNSITGSSNVGDTLPTGQLSNIPWRRAGVKYTNNEAYFDVVEEIDAIIDKSGSTVFAEIQGVIDACIKLSGMPDLSLSFMNPRLLDDVSFHPCIRFKRWESERVLSFIPPDGNFRLISYRVSSQNLVAIPVYVKHSISFKENSSCGRFDITIGPKQNMGKTIEGITVTVHMPKVVLNMNLTPTQGSYTFDPVTKVLTWDVGKITPQKLPSLKGLVNLQSGAPKPEENPSLNIQFKIQQLAISGLKVNRLDMYGEKYKPFKGVKYVTKAGKFQVRT</sequence>
<organism>
    <name type="scientific">Bos taurus</name>
    <name type="common">Bovine</name>
    <dbReference type="NCBI Taxonomy" id="9913"/>
    <lineage>
        <taxon>Eukaryota</taxon>
        <taxon>Metazoa</taxon>
        <taxon>Chordata</taxon>
        <taxon>Craniata</taxon>
        <taxon>Vertebrata</taxon>
        <taxon>Euteleostomi</taxon>
        <taxon>Mammalia</taxon>
        <taxon>Eutheria</taxon>
        <taxon>Laurasiatheria</taxon>
        <taxon>Artiodactyla</taxon>
        <taxon>Ruminantia</taxon>
        <taxon>Pecora</taxon>
        <taxon>Bovidae</taxon>
        <taxon>Bovinae</taxon>
        <taxon>Bos</taxon>
    </lineage>
</organism>
<feature type="chain" id="PRO_0000283802" description="AP-3 complex subunit mu-1">
    <location>
        <begin position="1"/>
        <end position="418"/>
    </location>
</feature>
<feature type="domain" description="MHD" evidence="2">
    <location>
        <begin position="176"/>
        <end position="417"/>
    </location>
</feature>
<protein>
    <recommendedName>
        <fullName>AP-3 complex subunit mu-1</fullName>
    </recommendedName>
    <alternativeName>
        <fullName>AP-3 adaptor complex mu3A subunit</fullName>
    </alternativeName>
    <alternativeName>
        <fullName>Adaptor-related protein complex 3 subunit mu-1</fullName>
    </alternativeName>
    <alternativeName>
        <fullName>Mu-adaptin 3A</fullName>
    </alternativeName>
    <alternativeName>
        <fullName>Mu3A-adaptin</fullName>
    </alternativeName>
</protein>
<proteinExistence type="evidence at transcript level"/>
<reference key="1">
    <citation type="submission" date="2006-02" db="EMBL/GenBank/DDBJ databases">
        <authorList>
            <consortium name="NIH - Mammalian Gene Collection (MGC) project"/>
        </authorList>
    </citation>
    <scope>NUCLEOTIDE SEQUENCE [LARGE SCALE MRNA]</scope>
    <source>
        <strain>Hereford</strain>
        <tissue>Hypothalamus</tissue>
    </source>
</reference>
<accession>Q24K11</accession>
<dbReference type="EMBL" id="BC114044">
    <property type="protein sequence ID" value="AAI14045.1"/>
    <property type="molecule type" value="mRNA"/>
</dbReference>
<dbReference type="RefSeq" id="NP_001069148.1">
    <property type="nucleotide sequence ID" value="NM_001075680.2"/>
</dbReference>
<dbReference type="SMR" id="Q24K11"/>
<dbReference type="FunCoup" id="Q24K11">
    <property type="interactions" value="2101"/>
</dbReference>
<dbReference type="STRING" id="9913.ENSBTAP00000029169"/>
<dbReference type="PaxDb" id="9913-ENSBTAP00000029169"/>
<dbReference type="GeneID" id="514761"/>
<dbReference type="KEGG" id="bta:514761"/>
<dbReference type="CTD" id="26985"/>
<dbReference type="eggNOG" id="KOG2740">
    <property type="taxonomic scope" value="Eukaryota"/>
</dbReference>
<dbReference type="InParanoid" id="Q24K11"/>
<dbReference type="OrthoDB" id="870at2759"/>
<dbReference type="Proteomes" id="UP000009136">
    <property type="component" value="Unplaced"/>
</dbReference>
<dbReference type="GO" id="GO:1904115">
    <property type="term" value="C:axon cytoplasm"/>
    <property type="evidence" value="ECO:0007669"/>
    <property type="project" value="GOC"/>
</dbReference>
<dbReference type="GO" id="GO:0030131">
    <property type="term" value="C:clathrin adaptor complex"/>
    <property type="evidence" value="ECO:0007669"/>
    <property type="project" value="InterPro"/>
</dbReference>
<dbReference type="GO" id="GO:0031410">
    <property type="term" value="C:cytoplasmic vesicle"/>
    <property type="evidence" value="ECO:0000318"/>
    <property type="project" value="GO_Central"/>
</dbReference>
<dbReference type="GO" id="GO:0030659">
    <property type="term" value="C:cytoplasmic vesicle membrane"/>
    <property type="evidence" value="ECO:0007669"/>
    <property type="project" value="UniProtKB-SubCell"/>
</dbReference>
<dbReference type="GO" id="GO:0005794">
    <property type="term" value="C:Golgi apparatus"/>
    <property type="evidence" value="ECO:0007669"/>
    <property type="project" value="UniProtKB-SubCell"/>
</dbReference>
<dbReference type="GO" id="GO:0008089">
    <property type="term" value="P:anterograde axonal transport"/>
    <property type="evidence" value="ECO:0000250"/>
    <property type="project" value="UniProtKB"/>
</dbReference>
<dbReference type="GO" id="GO:0048490">
    <property type="term" value="P:anterograde synaptic vesicle transport"/>
    <property type="evidence" value="ECO:0000250"/>
    <property type="project" value="UniProtKB"/>
</dbReference>
<dbReference type="GO" id="GO:0006897">
    <property type="term" value="P:endocytosis"/>
    <property type="evidence" value="ECO:0000318"/>
    <property type="project" value="GO_Central"/>
</dbReference>
<dbReference type="GO" id="GO:0006886">
    <property type="term" value="P:intracellular protein transport"/>
    <property type="evidence" value="ECO:0007669"/>
    <property type="project" value="InterPro"/>
</dbReference>
<dbReference type="CDD" id="cd09260">
    <property type="entry name" value="AP-3_Mu3A_Cterm"/>
    <property type="match status" value="1"/>
</dbReference>
<dbReference type="CDD" id="cd14837">
    <property type="entry name" value="AP3_Mu_N"/>
    <property type="match status" value="1"/>
</dbReference>
<dbReference type="FunFam" id="3.30.450.60:FF:000012">
    <property type="entry name" value="AP-3 complex subunit mu-1 isoform X1"/>
    <property type="match status" value="1"/>
</dbReference>
<dbReference type="FunFam" id="2.60.40.1170:FF:000006">
    <property type="entry name" value="Putative AP-3 complex subunit mu-2-like"/>
    <property type="match status" value="1"/>
</dbReference>
<dbReference type="Gene3D" id="3.30.450.60">
    <property type="match status" value="1"/>
</dbReference>
<dbReference type="Gene3D" id="2.60.40.1170">
    <property type="entry name" value="Mu homology domain, subdomain B"/>
    <property type="match status" value="2"/>
</dbReference>
<dbReference type="InterPro" id="IPR050431">
    <property type="entry name" value="Adaptor_comp_med_subunit"/>
</dbReference>
<dbReference type="InterPro" id="IPR036168">
    <property type="entry name" value="AP2_Mu_C_sf"/>
</dbReference>
<dbReference type="InterPro" id="IPR022775">
    <property type="entry name" value="AP_mu_sigma_su"/>
</dbReference>
<dbReference type="InterPro" id="IPR001392">
    <property type="entry name" value="Clathrin_mu"/>
</dbReference>
<dbReference type="InterPro" id="IPR018240">
    <property type="entry name" value="Clathrin_mu_CS"/>
</dbReference>
<dbReference type="InterPro" id="IPR011012">
    <property type="entry name" value="Longin-like_dom_sf"/>
</dbReference>
<dbReference type="InterPro" id="IPR028565">
    <property type="entry name" value="MHD"/>
</dbReference>
<dbReference type="PANTHER" id="PTHR10529">
    <property type="entry name" value="AP COMPLEX SUBUNIT MU"/>
    <property type="match status" value="1"/>
</dbReference>
<dbReference type="Pfam" id="PF00928">
    <property type="entry name" value="Adap_comp_sub"/>
    <property type="match status" value="1"/>
</dbReference>
<dbReference type="Pfam" id="PF01217">
    <property type="entry name" value="Clat_adaptor_s"/>
    <property type="match status" value="1"/>
</dbReference>
<dbReference type="PIRSF" id="PIRSF005992">
    <property type="entry name" value="Clathrin_mu"/>
    <property type="match status" value="1"/>
</dbReference>
<dbReference type="PRINTS" id="PR00314">
    <property type="entry name" value="CLATHRINADPT"/>
</dbReference>
<dbReference type="SUPFAM" id="SSF49447">
    <property type="entry name" value="Second domain of Mu2 adaptin subunit (ap50) of ap2 adaptor"/>
    <property type="match status" value="1"/>
</dbReference>
<dbReference type="SUPFAM" id="SSF64356">
    <property type="entry name" value="SNARE-like"/>
    <property type="match status" value="1"/>
</dbReference>
<dbReference type="PROSITE" id="PS00990">
    <property type="entry name" value="CLAT_ADAPTOR_M_1"/>
    <property type="match status" value="1"/>
</dbReference>
<dbReference type="PROSITE" id="PS00991">
    <property type="entry name" value="CLAT_ADAPTOR_M_2"/>
    <property type="match status" value="1"/>
</dbReference>
<dbReference type="PROSITE" id="PS51072">
    <property type="entry name" value="MHD"/>
    <property type="match status" value="1"/>
</dbReference>
<comment type="function">
    <text evidence="1">Part of the AP-3 complex, an adaptor-related complex which is not clathrin-associated. The complex is associated with the Golgi region as well as more peripheral structures. It facilitates the budding of vesicles from the Golgi membrane and may be directly involved in trafficking to lysosomes. In concert with the BLOC-1 complex, AP-3 is required to target cargos into vesicles assembled at cell bodies for delivery into neurites and nerve terminals (By similarity).</text>
</comment>
<comment type="subunit">
    <text evidence="1">Adaptor protein complex 3 (AP-3) is a heterotetramer composed of two large adaptins (delta-type subunit AP3D1 and beta-type subunit AP3B1 or AP3B2), a medium adaptin (mu-type subunit AP3M1 or AP3M2) and a small adaptin (sigma-type subunit APS1 or AP3S2). Interacts with AGAP1. AP-3 associates with the BLOC-1 complex (By similarity).</text>
</comment>
<comment type="subcellular location">
    <subcellularLocation>
        <location evidence="1">Golgi apparatus</location>
    </subcellularLocation>
    <subcellularLocation>
        <location evidence="1">Cytoplasmic vesicle membrane</location>
        <topology evidence="1">Peripheral membrane protein</topology>
        <orientation evidence="1">Cytoplasmic side</orientation>
    </subcellularLocation>
    <text evidence="1">Component of the coat surrounding the cytoplasmic face of coated vesicles located at the Golgi complex.</text>
</comment>
<comment type="similarity">
    <text evidence="3">Belongs to the adaptor complexes medium subunit family.</text>
</comment>